<comment type="function">
    <text evidence="1">May be involved in rRNA-processing and ribosome biosynthesis.</text>
</comment>
<comment type="subunit">
    <text evidence="1">Component of the 90S pre-ribosomes.</text>
</comment>
<comment type="subcellular location">
    <subcellularLocation>
        <location evidence="1">Nucleus</location>
        <location evidence="1">Nucleolus</location>
    </subcellularLocation>
</comment>
<comment type="similarity">
    <text evidence="4">Belongs to the WD repeat NOL10/ENP2 family.</text>
</comment>
<comment type="sequence caution" evidence="4">
    <conflict type="erroneous gene model prediction">
        <sequence resource="EMBL-CDS" id="EGS19913"/>
    </conflict>
</comment>
<dbReference type="EMBL" id="GL988043">
    <property type="protein sequence ID" value="EGS19913.1"/>
    <property type="status" value="ALT_SEQ"/>
    <property type="molecule type" value="Genomic_DNA"/>
</dbReference>
<dbReference type="RefSeq" id="XP_006694798.1">
    <property type="nucleotide sequence ID" value="XM_006694735.1"/>
</dbReference>
<dbReference type="PDB" id="6RXU">
    <property type="method" value="EM"/>
    <property type="resolution" value="3.50 A"/>
    <property type="chains" value="CW=1-668"/>
</dbReference>
<dbReference type="PDB" id="6RXV">
    <property type="method" value="EM"/>
    <property type="resolution" value="4.00 A"/>
    <property type="chains" value="CW=1-668"/>
</dbReference>
<dbReference type="PDB" id="6RXX">
    <property type="method" value="EM"/>
    <property type="resolution" value="7.10 A"/>
    <property type="chains" value="CW=1-668"/>
</dbReference>
<dbReference type="PDB" id="6RXZ">
    <property type="method" value="EM"/>
    <property type="resolution" value="4.40 A"/>
    <property type="chains" value="CW=1-668"/>
</dbReference>
<dbReference type="PDBsum" id="6RXU"/>
<dbReference type="PDBsum" id="6RXV"/>
<dbReference type="PDBsum" id="6RXX"/>
<dbReference type="PDBsum" id="6RXZ"/>
<dbReference type="EMDB" id="EMD-10052"/>
<dbReference type="EMDB" id="EMD-10053"/>
<dbReference type="EMDB" id="EMD-10054"/>
<dbReference type="EMDB" id="EMD-10056"/>
<dbReference type="SMR" id="G0S902"/>
<dbReference type="STRING" id="759272.G0S902"/>
<dbReference type="GeneID" id="18258444"/>
<dbReference type="KEGG" id="cthr:CTHT_0044060"/>
<dbReference type="eggNOG" id="KOG2321">
    <property type="taxonomic scope" value="Eukaryota"/>
</dbReference>
<dbReference type="HOGENOM" id="CLU_009923_0_1_1"/>
<dbReference type="OrthoDB" id="273340at2759"/>
<dbReference type="Proteomes" id="UP000008066">
    <property type="component" value="Unassembled WGS sequence"/>
</dbReference>
<dbReference type="GO" id="GO:0030686">
    <property type="term" value="C:90S preribosome"/>
    <property type="evidence" value="ECO:0007669"/>
    <property type="project" value="TreeGrafter"/>
</dbReference>
<dbReference type="GO" id="GO:0005730">
    <property type="term" value="C:nucleolus"/>
    <property type="evidence" value="ECO:0007669"/>
    <property type="project" value="UniProtKB-SubCell"/>
</dbReference>
<dbReference type="GO" id="GO:0032040">
    <property type="term" value="C:small-subunit processome"/>
    <property type="evidence" value="ECO:0007669"/>
    <property type="project" value="TreeGrafter"/>
</dbReference>
<dbReference type="GO" id="GO:0000462">
    <property type="term" value="P:maturation of SSU-rRNA from tricistronic rRNA transcript (SSU-rRNA, 5.8S rRNA, LSU-rRNA)"/>
    <property type="evidence" value="ECO:0007669"/>
    <property type="project" value="TreeGrafter"/>
</dbReference>
<dbReference type="Gene3D" id="2.130.10.10">
    <property type="entry name" value="YVTN repeat-like/Quinoprotein amine dehydrogenase"/>
    <property type="match status" value="1"/>
</dbReference>
<dbReference type="InterPro" id="IPR056551">
    <property type="entry name" value="Beta-prop_NOL10_N"/>
</dbReference>
<dbReference type="InterPro" id="IPR040382">
    <property type="entry name" value="NOL10/Enp2"/>
</dbReference>
<dbReference type="InterPro" id="IPR056550">
    <property type="entry name" value="NOL10_2nd"/>
</dbReference>
<dbReference type="InterPro" id="IPR012580">
    <property type="entry name" value="NUC153"/>
</dbReference>
<dbReference type="InterPro" id="IPR015943">
    <property type="entry name" value="WD40/YVTN_repeat-like_dom_sf"/>
</dbReference>
<dbReference type="InterPro" id="IPR036322">
    <property type="entry name" value="WD40_repeat_dom_sf"/>
</dbReference>
<dbReference type="PANTHER" id="PTHR14927">
    <property type="entry name" value="NUCLEOLAR PROTEIN 10"/>
    <property type="match status" value="1"/>
</dbReference>
<dbReference type="PANTHER" id="PTHR14927:SF0">
    <property type="entry name" value="NUCLEOLAR PROTEIN 10"/>
    <property type="match status" value="1"/>
</dbReference>
<dbReference type="Pfam" id="PF23098">
    <property type="entry name" value="Beta-prop_NOL10_N"/>
    <property type="match status" value="1"/>
</dbReference>
<dbReference type="Pfam" id="PF23097">
    <property type="entry name" value="NOL10_2nd"/>
    <property type="match status" value="1"/>
</dbReference>
<dbReference type="Pfam" id="PF08159">
    <property type="entry name" value="NUC153"/>
    <property type="match status" value="1"/>
</dbReference>
<dbReference type="SUPFAM" id="SSF50978">
    <property type="entry name" value="WD40 repeat-like"/>
    <property type="match status" value="1"/>
</dbReference>
<dbReference type="PROSITE" id="PS50294">
    <property type="entry name" value="WD_REPEATS_REGION"/>
    <property type="match status" value="1"/>
</dbReference>
<protein>
    <recommendedName>
        <fullName>Ribosome biogenesis protein ENP2</fullName>
    </recommendedName>
</protein>
<sequence length="668" mass="75714">MKLTNPGPVPVYTVAGPSTARPLPDWLLRRRKRSAKYDPENLNNFELIQEFEFEEASNCVRVSEDGNWIMSTGTYKPQFHVHNTRELSLSFSRHTNSENVTFLLLSQDYSKSVHLQCDRTLEFHTPMGCHYSIRIPRFGRDLAYLRQSCEVLVPAVGLSSDGSGYGEVFRLDLERGQFLRPWQVDVGEDEPGSGLQGSIHAGAVNVAAVAENTHGLCAFGTSIGTVEFYDPRSKSRVAVLGNQDGEITALDYSRDGLSLALGTSTGQIRIFDLRNPRPLLKKDQGMGLPIKNLIHLTTPTEERKLLSADKRIIKIWDEQSGDLWTSVEPLVDLNFVTHVPDSGMILTANEGKQMHCFFIPNLGLAPRWCHFLDNLVHEMESEKRTETYDNYKFLTKPELKSLSLDHLIGKTNLLRPYMHGFFVHAKLYDQARLITNPYIWEEERAKRIKEKIEKERSSRIRGIKKVKVNQKLVEKIAERQEKKGKPDVAAAMLQDPRFGKLFEDEEFAVDETSREFRALNPSTKIPGAQGDQDGDVKMGDFSSEEESSEGSGSEDEREPRRENKKPEKPKEKPKKVEEPKKHEASKPKDEVVMQIRSSKEQGGKLGDTAFGEREQKDTRASRIRTGEVVGEQVLTFIPESKKKKPQPAPETKPRTDRRSASNNALRKL</sequence>
<accession>G0S902</accession>
<proteinExistence type="evidence at protein level"/>
<name>NOL10_CHATD</name>
<organism>
    <name type="scientific">Chaetomium thermophilum (strain DSM 1495 / CBS 144.50 / IMI 039719)</name>
    <name type="common">Thermochaetoides thermophila</name>
    <dbReference type="NCBI Taxonomy" id="759272"/>
    <lineage>
        <taxon>Eukaryota</taxon>
        <taxon>Fungi</taxon>
        <taxon>Dikarya</taxon>
        <taxon>Ascomycota</taxon>
        <taxon>Pezizomycotina</taxon>
        <taxon>Sordariomycetes</taxon>
        <taxon>Sordariomycetidae</taxon>
        <taxon>Sordariales</taxon>
        <taxon>Chaetomiaceae</taxon>
        <taxon>Thermochaetoides</taxon>
    </lineage>
</organism>
<evidence type="ECO:0000250" key="1">
    <source>
        <dbReference type="UniProtKB" id="P48234"/>
    </source>
</evidence>
<evidence type="ECO:0000255" key="2"/>
<evidence type="ECO:0000256" key="3">
    <source>
        <dbReference type="SAM" id="MobiDB-lite"/>
    </source>
</evidence>
<evidence type="ECO:0000305" key="4"/>
<gene>
    <name type="primary">ENP2</name>
    <name type="ORF">CTHT_0044060</name>
</gene>
<feature type="chain" id="PRO_0000435816" description="Ribosome biogenesis protein ENP2">
    <location>
        <begin position="1"/>
        <end position="668"/>
    </location>
</feature>
<feature type="repeat" description="WD 1" evidence="2">
    <location>
        <begin position="199"/>
        <end position="239"/>
    </location>
</feature>
<feature type="repeat" description="WD 2" evidence="2">
    <location>
        <begin position="242"/>
        <end position="281"/>
    </location>
</feature>
<feature type="repeat" description="WD 3" evidence="2">
    <location>
        <begin position="288"/>
        <end position="326"/>
    </location>
</feature>
<feature type="repeat" description="WD 4" evidence="2">
    <location>
        <begin position="328"/>
        <end position="367"/>
    </location>
</feature>
<feature type="repeat" description="WD 5" evidence="2">
    <location>
        <begin position="409"/>
        <end position="450"/>
    </location>
</feature>
<feature type="region of interest" description="Disordered" evidence="3">
    <location>
        <begin position="518"/>
        <end position="668"/>
    </location>
</feature>
<feature type="compositionally biased region" description="Acidic residues" evidence="3">
    <location>
        <begin position="542"/>
        <end position="556"/>
    </location>
</feature>
<feature type="compositionally biased region" description="Basic and acidic residues" evidence="3">
    <location>
        <begin position="557"/>
        <end position="602"/>
    </location>
</feature>
<feature type="compositionally biased region" description="Basic and acidic residues" evidence="3">
    <location>
        <begin position="610"/>
        <end position="620"/>
    </location>
</feature>
<keyword id="KW-0002">3D-structure</keyword>
<keyword id="KW-0539">Nucleus</keyword>
<keyword id="KW-1185">Reference proteome</keyword>
<keyword id="KW-0677">Repeat</keyword>
<keyword id="KW-0690">Ribosome biogenesis</keyword>
<keyword id="KW-0698">rRNA processing</keyword>
<keyword id="KW-0853">WD repeat</keyword>
<reference key="1">
    <citation type="journal article" date="2011" name="Cell">
        <title>Insight into structure and assembly of the nuclear pore complex by utilizing the genome of a eukaryotic thermophile.</title>
        <authorList>
            <person name="Amlacher S."/>
            <person name="Sarges P."/>
            <person name="Flemming D."/>
            <person name="van Noort V."/>
            <person name="Kunze R."/>
            <person name="Devos D.P."/>
            <person name="Arumugam M."/>
            <person name="Bork P."/>
            <person name="Hurt E."/>
        </authorList>
    </citation>
    <scope>NUCLEOTIDE SEQUENCE [LARGE SCALE GENOMIC DNA]</scope>
    <source>
        <strain>DSM 1495 / CBS 144.50 / IMI 039719</strain>
    </source>
</reference>